<gene>
    <name evidence="4" type="primary">Cblif</name>
    <name evidence="4" type="synonym">Gif</name>
</gene>
<proteinExistence type="evidence at protein level"/>
<comment type="function">
    <text evidence="1">Promotes absorption of the essential vitamin cobalamin (Cbl) in the ileum. After interaction with CUBN, the CBLIF-cobalamin complex is internalized via receptor-mediated endocytosis (By similarity).</text>
</comment>
<comment type="subunit">
    <text evidence="1">Interacts with CUBN (via CUB domains).</text>
</comment>
<comment type="subcellular location">
    <subcellularLocation>
        <location>Secreted</location>
    </subcellularLocation>
</comment>
<comment type="tissue specificity">
    <text>Gastric mucosa.</text>
</comment>
<comment type="PTM">
    <text>The N-terminus is blocked.</text>
</comment>
<comment type="similarity">
    <text evidence="3">Belongs to the eukaryotic cobalamin transport proteins family.</text>
</comment>
<comment type="sequence caution" evidence="3">
    <conflict type="erroneous initiation">
        <sequence resource="EMBL-CDS" id="AAA41361"/>
    </conflict>
    <text>Extended N-terminus.</text>
</comment>
<comment type="sequence caution" evidence="3">
    <conflict type="erroneous initiation">
        <sequence resource="EMBL-CDS" id="BAA08140"/>
    </conflict>
    <text>Extended N-terminus.</text>
</comment>
<protein>
    <recommendedName>
        <fullName evidence="3">Cobalamin binding intrinsic factor</fullName>
    </recommendedName>
    <alternativeName>
        <fullName evidence="3">Gastric intrinsic factor</fullName>
    </alternativeName>
    <alternativeName>
        <fullName>Intrinsic factor</fullName>
        <shortName>IF</shortName>
        <shortName>INF</shortName>
    </alternativeName>
</protein>
<dbReference type="EMBL" id="J03577">
    <property type="protein sequence ID" value="AAA41361.1"/>
    <property type="status" value="ALT_INIT"/>
    <property type="molecule type" value="mRNA"/>
</dbReference>
<dbReference type="EMBL" id="D45200">
    <property type="protein sequence ID" value="BAA08140.1"/>
    <property type="status" value="ALT_INIT"/>
    <property type="molecule type" value="Genomic_DNA"/>
</dbReference>
<dbReference type="PIR" id="A34003">
    <property type="entry name" value="A34003"/>
</dbReference>
<dbReference type="RefSeq" id="NP_058858.1">
    <property type="nucleotide sequence ID" value="NM_017162.3"/>
</dbReference>
<dbReference type="SMR" id="P17267"/>
<dbReference type="FunCoup" id="P17267">
    <property type="interactions" value="31"/>
</dbReference>
<dbReference type="STRING" id="10116.ENSRNOP00000028507"/>
<dbReference type="GlyCosmos" id="P17267">
    <property type="glycosylation" value="4 sites, No reported glycans"/>
</dbReference>
<dbReference type="GlyGen" id="P17267">
    <property type="glycosylation" value="4 sites"/>
</dbReference>
<dbReference type="iPTMnet" id="P17267"/>
<dbReference type="PhosphoSitePlus" id="P17267"/>
<dbReference type="PaxDb" id="10116-ENSRNOP00000028507"/>
<dbReference type="GeneID" id="29319"/>
<dbReference type="KEGG" id="rno:29319"/>
<dbReference type="UCSC" id="RGD:62084">
    <property type="organism name" value="rat"/>
</dbReference>
<dbReference type="AGR" id="RGD:62084"/>
<dbReference type="CTD" id="2694"/>
<dbReference type="RGD" id="62084">
    <property type="gene designation" value="Cblif"/>
</dbReference>
<dbReference type="eggNOG" id="ENOG502RXIA">
    <property type="taxonomic scope" value="Eukaryota"/>
</dbReference>
<dbReference type="InParanoid" id="P17267"/>
<dbReference type="OrthoDB" id="6343110at2759"/>
<dbReference type="PhylomeDB" id="P17267"/>
<dbReference type="TreeFam" id="TF333092"/>
<dbReference type="Reactome" id="R-RNO-9758881">
    <property type="pathway name" value="Uptake of dietary cobalamins into enterocytes"/>
</dbReference>
<dbReference type="PRO" id="PR:P17267"/>
<dbReference type="Proteomes" id="UP000002494">
    <property type="component" value="Unplaced"/>
</dbReference>
<dbReference type="GO" id="GO:0016324">
    <property type="term" value="C:apical plasma membrane"/>
    <property type="evidence" value="ECO:0000266"/>
    <property type="project" value="RGD"/>
</dbReference>
<dbReference type="GO" id="GO:0005768">
    <property type="term" value="C:endosome"/>
    <property type="evidence" value="ECO:0000266"/>
    <property type="project" value="RGD"/>
</dbReference>
<dbReference type="GO" id="GO:0005615">
    <property type="term" value="C:extracellular space"/>
    <property type="evidence" value="ECO:0000266"/>
    <property type="project" value="RGD"/>
</dbReference>
<dbReference type="GO" id="GO:0005902">
    <property type="term" value="C:microvillus"/>
    <property type="evidence" value="ECO:0000266"/>
    <property type="project" value="RGD"/>
</dbReference>
<dbReference type="GO" id="GO:0140355">
    <property type="term" value="F:cargo receptor ligand activity"/>
    <property type="evidence" value="ECO:0000266"/>
    <property type="project" value="RGD"/>
</dbReference>
<dbReference type="GO" id="GO:0031419">
    <property type="term" value="F:cobalamin binding"/>
    <property type="evidence" value="ECO:0000314"/>
    <property type="project" value="RGD"/>
</dbReference>
<dbReference type="GO" id="GO:0019842">
    <property type="term" value="F:vitamin binding"/>
    <property type="evidence" value="ECO:0000304"/>
    <property type="project" value="RGD"/>
</dbReference>
<dbReference type="GO" id="GO:0015889">
    <property type="term" value="P:cobalamin transport"/>
    <property type="evidence" value="ECO:0000266"/>
    <property type="project" value="RGD"/>
</dbReference>
<dbReference type="GO" id="GO:0006824">
    <property type="term" value="P:cobalt ion transport"/>
    <property type="evidence" value="ECO:0007669"/>
    <property type="project" value="UniProtKB-KW"/>
</dbReference>
<dbReference type="Gene3D" id="1.50.10.20">
    <property type="match status" value="1"/>
</dbReference>
<dbReference type="Gene3D" id="2.170.130.30">
    <property type="match status" value="1"/>
</dbReference>
<dbReference type="InterPro" id="IPR002157">
    <property type="entry name" value="Cbl-bd_prot"/>
</dbReference>
<dbReference type="InterPro" id="IPR051588">
    <property type="entry name" value="Cobalamin_Transport"/>
</dbReference>
<dbReference type="PANTHER" id="PTHR10559:SF15">
    <property type="entry name" value="COBALAMIN BINDING INTRINSIC FACTOR"/>
    <property type="match status" value="1"/>
</dbReference>
<dbReference type="PANTHER" id="PTHR10559">
    <property type="entry name" value="TRANSCOBALAMIN-1/GASTRIC INTRINSIC FACTOR"/>
    <property type="match status" value="1"/>
</dbReference>
<dbReference type="Pfam" id="PF01122">
    <property type="entry name" value="Cobalamin_bind"/>
    <property type="match status" value="1"/>
</dbReference>
<dbReference type="PROSITE" id="PS00468">
    <property type="entry name" value="COBALAMIN_BINDING"/>
    <property type="match status" value="1"/>
</dbReference>
<feature type="signal peptide" evidence="3">
    <location>
        <begin position="1"/>
        <end position="18"/>
    </location>
</feature>
<feature type="chain" id="PRO_0000005560" description="Cobalamin binding intrinsic factor">
    <location>
        <begin position="19"/>
        <end position="417"/>
    </location>
</feature>
<feature type="binding site" evidence="1">
    <location>
        <position position="171"/>
    </location>
    <ligand>
        <name>cob(II)alamin</name>
        <dbReference type="ChEBI" id="CHEBI:16304"/>
    </ligand>
</feature>
<feature type="binding site" evidence="1">
    <location>
        <position position="222"/>
    </location>
    <ligand>
        <name>cob(II)alamin</name>
        <dbReference type="ChEBI" id="CHEBI:16304"/>
    </ligand>
</feature>
<feature type="binding site" evidence="1">
    <location>
        <position position="270"/>
    </location>
    <ligand>
        <name>cob(II)alamin</name>
        <dbReference type="ChEBI" id="CHEBI:16304"/>
    </ligand>
</feature>
<feature type="binding site" evidence="1">
    <location>
        <begin position="365"/>
        <end position="370"/>
    </location>
    <ligand>
        <name>cob(II)alamin</name>
        <dbReference type="ChEBI" id="CHEBI:16304"/>
    </ligand>
</feature>
<feature type="binding site" evidence="1">
    <location>
        <begin position="386"/>
        <end position="395"/>
    </location>
    <ligand>
        <name>cob(II)alamin</name>
        <dbReference type="ChEBI" id="CHEBI:16304"/>
    </ligand>
</feature>
<feature type="modified residue" description="Phosphoserine" evidence="5">
    <location>
        <position position="191"/>
    </location>
</feature>
<feature type="glycosylation site" description="N-linked (GlcNAc...) asparagine" evidence="2">
    <location>
        <position position="209"/>
    </location>
</feature>
<feature type="glycosylation site" description="N-linked (GlcNAc...) asparagine" evidence="2">
    <location>
        <position position="311"/>
    </location>
</feature>
<feature type="glycosylation site" description="N-linked (GlcNAc...) asparagine" evidence="2">
    <location>
        <position position="330"/>
    </location>
</feature>
<feature type="glycosylation site" description="N-linked (GlcNAc...) asparagine" evidence="2">
    <location>
        <position position="413"/>
    </location>
</feature>
<feature type="disulfide bond" evidence="1">
    <location>
        <begin position="26"/>
        <end position="246"/>
    </location>
</feature>
<feature type="disulfide bond" evidence="1">
    <location>
        <begin position="103"/>
        <end position="288"/>
    </location>
</feature>
<feature type="disulfide bond" evidence="1">
    <location>
        <begin position="143"/>
        <end position="182"/>
    </location>
</feature>
<reference key="1">
    <citation type="journal article" date="1988" name="Proc. Natl. Acad. Sci. U.S.A.">
        <title>Isolation and structural characterization of a cDNA clone encoding rat gastric intrinsic factor.</title>
        <authorList>
            <person name="Dieckgraefe B.K."/>
            <person name="Seetharam B."/>
            <person name="Banaszak L."/>
            <person name="Leykam J.F."/>
            <person name="Alpers D.H."/>
        </authorList>
    </citation>
    <scope>NUCLEOTIDE SEQUENCE [MRNA]</scope>
    <scope>PROTEIN SEQUENCE OF 262-276 AND 384-392</scope>
</reference>
<reference key="2">
    <citation type="journal article" date="1995" name="J. Biochem.">
        <title>The rat intrinsic factor gene: its 5'-upstream region and chief cell-specific transcription.</title>
        <authorList>
            <person name="Maeda M."/>
            <person name="Asahara S."/>
            <person name="Nishi T."/>
            <person name="Mushiake S."/>
            <person name="Oka T."/>
            <person name="Shimada S."/>
            <person name="Chiba T."/>
            <person name="Tohyama M."/>
            <person name="Futai M."/>
        </authorList>
    </citation>
    <scope>NUCLEOTIDE SEQUENCE [GENOMIC DNA] OF 1-170</scope>
    <source>
        <strain>Sprague-Dawley</strain>
        <tissue>Liver</tissue>
    </source>
</reference>
<reference key="3">
    <citation type="journal article" date="2012" name="Nat. Commun.">
        <title>Quantitative maps of protein phosphorylation sites across 14 different rat organs and tissues.</title>
        <authorList>
            <person name="Lundby A."/>
            <person name="Secher A."/>
            <person name="Lage K."/>
            <person name="Nordsborg N.B."/>
            <person name="Dmytriyev A."/>
            <person name="Lundby C."/>
            <person name="Olsen J.V."/>
        </authorList>
    </citation>
    <scope>PHOSPHORYLATION [LARGE SCALE ANALYSIS] AT SER-191</scope>
    <scope>IDENTIFICATION BY MASS SPECTROMETRY [LARGE SCALE ANALYSIS]</scope>
</reference>
<accession>P17267</accession>
<accession>O35801</accession>
<keyword id="KW-0170">Cobalt</keyword>
<keyword id="KW-0171">Cobalt transport</keyword>
<keyword id="KW-0903">Direct protein sequencing</keyword>
<keyword id="KW-1015">Disulfide bond</keyword>
<keyword id="KW-0325">Glycoprotein</keyword>
<keyword id="KW-0406">Ion transport</keyword>
<keyword id="KW-0597">Phosphoprotein</keyword>
<keyword id="KW-1185">Reference proteome</keyword>
<keyword id="KW-0964">Secreted</keyword>
<keyword id="KW-0732">Signal</keyword>
<keyword id="KW-0813">Transport</keyword>
<name>IF_RAT</name>
<sequence length="417" mass="45956">MAWLSFYLLNVLWAVAGTSTRAQRSCSVPPDQQPWVNGLQLLMENSVTESDLPNPSILIAMNLASTYNLEAQKLLTYQLMASDSADLTNGQLALTIMALTSSCRDPGSKVSILQKNMESWTPSNLGAESSSFYGPALAILALCQKNSEATLPIAVRFAKTLMMESSPFSVDTGAVATLALTCMYNRIPVGSQENYRDLFGQALKVIVDNISLRIKADGIIGDIYSTGLAMQALSVTPEQPTKEWDCEKTMYTILKEIKQGKFQNPMSIAQILPSLKGKTYLDVPQVTCGPDHEVPPTLTDYPTPVPTSISNITVIYTINNQLRGVDLLFNVTIEVSVKSGSVLLAVLEEAQRRNHMFKFETTMTSWGLIVSSINNIAENVKHKTYWEFLSGKTPLGEGVAYYIPFNYEHITANFTQY</sequence>
<evidence type="ECO:0000250" key="1"/>
<evidence type="ECO:0000255" key="2"/>
<evidence type="ECO:0000305" key="3"/>
<evidence type="ECO:0000312" key="4">
    <source>
        <dbReference type="RGD" id="62084"/>
    </source>
</evidence>
<evidence type="ECO:0007744" key="5">
    <source>
    </source>
</evidence>
<organism>
    <name type="scientific">Rattus norvegicus</name>
    <name type="common">Rat</name>
    <dbReference type="NCBI Taxonomy" id="10116"/>
    <lineage>
        <taxon>Eukaryota</taxon>
        <taxon>Metazoa</taxon>
        <taxon>Chordata</taxon>
        <taxon>Craniata</taxon>
        <taxon>Vertebrata</taxon>
        <taxon>Euteleostomi</taxon>
        <taxon>Mammalia</taxon>
        <taxon>Eutheria</taxon>
        <taxon>Euarchontoglires</taxon>
        <taxon>Glires</taxon>
        <taxon>Rodentia</taxon>
        <taxon>Myomorpha</taxon>
        <taxon>Muroidea</taxon>
        <taxon>Muridae</taxon>
        <taxon>Murinae</taxon>
        <taxon>Rattus</taxon>
    </lineage>
</organism>